<feature type="chain" id="PRO_0000383445" description="L-lactate dehydrogenase">
    <location>
        <begin position="1"/>
        <end position="396"/>
    </location>
</feature>
<feature type="domain" description="FMN hydroxy acid dehydrogenase" evidence="1">
    <location>
        <begin position="1"/>
        <end position="380"/>
    </location>
</feature>
<feature type="active site" description="Proton acceptor" evidence="1">
    <location>
        <position position="275"/>
    </location>
</feature>
<feature type="binding site" evidence="1">
    <location>
        <position position="24"/>
    </location>
    <ligand>
        <name>substrate</name>
    </ligand>
</feature>
<feature type="binding site" evidence="1">
    <location>
        <position position="106"/>
    </location>
    <ligand>
        <name>FMN</name>
        <dbReference type="ChEBI" id="CHEBI:58210"/>
    </ligand>
</feature>
<feature type="binding site" evidence="1">
    <location>
        <position position="127"/>
    </location>
    <ligand>
        <name>FMN</name>
        <dbReference type="ChEBI" id="CHEBI:58210"/>
    </ligand>
</feature>
<feature type="binding site" evidence="1">
    <location>
        <position position="129"/>
    </location>
    <ligand>
        <name>substrate</name>
    </ligand>
</feature>
<feature type="binding site" evidence="1">
    <location>
        <position position="155"/>
    </location>
    <ligand>
        <name>FMN</name>
        <dbReference type="ChEBI" id="CHEBI:58210"/>
    </ligand>
</feature>
<feature type="binding site" evidence="1">
    <location>
        <position position="164"/>
    </location>
    <ligand>
        <name>substrate</name>
    </ligand>
</feature>
<feature type="binding site" evidence="1">
    <location>
        <position position="251"/>
    </location>
    <ligand>
        <name>FMN</name>
        <dbReference type="ChEBI" id="CHEBI:58210"/>
    </ligand>
</feature>
<feature type="binding site" evidence="1">
    <location>
        <position position="278"/>
    </location>
    <ligand>
        <name>substrate</name>
    </ligand>
</feature>
<feature type="binding site" evidence="1">
    <location>
        <begin position="306"/>
        <end position="330"/>
    </location>
    <ligand>
        <name>FMN</name>
        <dbReference type="ChEBI" id="CHEBI:58210"/>
    </ligand>
</feature>
<organism>
    <name type="scientific">Salmonella paratyphi B (strain ATCC BAA-1250 / SPB7)</name>
    <dbReference type="NCBI Taxonomy" id="1016998"/>
    <lineage>
        <taxon>Bacteria</taxon>
        <taxon>Pseudomonadati</taxon>
        <taxon>Pseudomonadota</taxon>
        <taxon>Gammaproteobacteria</taxon>
        <taxon>Enterobacterales</taxon>
        <taxon>Enterobacteriaceae</taxon>
        <taxon>Salmonella</taxon>
    </lineage>
</organism>
<evidence type="ECO:0000255" key="1">
    <source>
        <dbReference type="HAMAP-Rule" id="MF_01559"/>
    </source>
</evidence>
<keyword id="KW-0997">Cell inner membrane</keyword>
<keyword id="KW-1003">Cell membrane</keyword>
<keyword id="KW-0285">Flavoprotein</keyword>
<keyword id="KW-0288">FMN</keyword>
<keyword id="KW-0472">Membrane</keyword>
<keyword id="KW-0560">Oxidoreductase</keyword>
<sequence length="396" mass="42744">MIISAASDYRAAAQRTLPPFLFHYIDGGAYAEYTLRRNVEDLSQVALRQRVLKNMSDLSLETTLFNETLSMPVALAPVGLCGMYARRGEVQAAAAADAKGIPFTLSTVSVCPIEEVAPTIKRPMWFQLYVLRDRGFMRNALERAKAAGCSTLVFTVDMPTPGARYRDAHSGMSGPNAAMRRYWQAVMHPKWAWDVGLNGRPHDLGNISAYLGKPTGLEDYIGWLANNFDPSISWKDLEWIREFWDGPMVIKGILDPEDARDAVRFGADGIVVSNHGGRQLDGVLSSARALPAIADAVKGDIAILADSGIRNGLDVVRMIALGADTVLLGRAYLYALATAGKAGVANLLDLIEKEMKVAMTLTGAKSISEISGDSLVQELGKSLPTALAPMSKGDAA</sequence>
<proteinExistence type="inferred from homology"/>
<dbReference type="EC" id="1.1.-.-" evidence="1"/>
<dbReference type="EMBL" id="CP000886">
    <property type="protein sequence ID" value="ABX69903.1"/>
    <property type="molecule type" value="Genomic_DNA"/>
</dbReference>
<dbReference type="RefSeq" id="WP_000586990.1">
    <property type="nucleotide sequence ID" value="NC_010102.1"/>
</dbReference>
<dbReference type="SMR" id="A9MVJ5"/>
<dbReference type="KEGG" id="spq:SPAB_04590"/>
<dbReference type="PATRIC" id="fig|1016998.12.peg.4316"/>
<dbReference type="HOGENOM" id="CLU_020639_0_0_6"/>
<dbReference type="BioCyc" id="SENT1016998:SPAB_RS18665-MONOMER"/>
<dbReference type="Proteomes" id="UP000008556">
    <property type="component" value="Chromosome"/>
</dbReference>
<dbReference type="GO" id="GO:0005886">
    <property type="term" value="C:plasma membrane"/>
    <property type="evidence" value="ECO:0007669"/>
    <property type="project" value="UniProtKB-SubCell"/>
</dbReference>
<dbReference type="GO" id="GO:0010181">
    <property type="term" value="F:FMN binding"/>
    <property type="evidence" value="ECO:0007669"/>
    <property type="project" value="InterPro"/>
</dbReference>
<dbReference type="GO" id="GO:0004459">
    <property type="term" value="F:L-lactate dehydrogenase activity"/>
    <property type="evidence" value="ECO:0007669"/>
    <property type="project" value="UniProtKB-UniRule"/>
</dbReference>
<dbReference type="GO" id="GO:0009060">
    <property type="term" value="P:aerobic respiration"/>
    <property type="evidence" value="ECO:0007669"/>
    <property type="project" value="TreeGrafter"/>
</dbReference>
<dbReference type="GO" id="GO:0006089">
    <property type="term" value="P:lactate metabolic process"/>
    <property type="evidence" value="ECO:0007669"/>
    <property type="project" value="UniProtKB-UniRule"/>
</dbReference>
<dbReference type="CDD" id="cd02809">
    <property type="entry name" value="alpha_hydroxyacid_oxid_FMN"/>
    <property type="match status" value="1"/>
</dbReference>
<dbReference type="FunFam" id="3.20.20.70:FF:000029">
    <property type="entry name" value="L-lactate dehydrogenase"/>
    <property type="match status" value="1"/>
</dbReference>
<dbReference type="Gene3D" id="3.20.20.70">
    <property type="entry name" value="Aldolase class I"/>
    <property type="match status" value="1"/>
</dbReference>
<dbReference type="HAMAP" id="MF_01559">
    <property type="entry name" value="L_lact_dehydr"/>
    <property type="match status" value="1"/>
</dbReference>
<dbReference type="InterPro" id="IPR013785">
    <property type="entry name" value="Aldolase_TIM"/>
</dbReference>
<dbReference type="InterPro" id="IPR012133">
    <property type="entry name" value="Alpha-hydoxy_acid_DH_FMN"/>
</dbReference>
<dbReference type="InterPro" id="IPR000262">
    <property type="entry name" value="FMN-dep_DH"/>
</dbReference>
<dbReference type="InterPro" id="IPR037396">
    <property type="entry name" value="FMN_HAD"/>
</dbReference>
<dbReference type="InterPro" id="IPR008259">
    <property type="entry name" value="FMN_hydac_DH_AS"/>
</dbReference>
<dbReference type="InterPro" id="IPR020920">
    <property type="entry name" value="LldD"/>
</dbReference>
<dbReference type="NCBIfam" id="NF033901">
    <property type="entry name" value="L_lactate_LldD"/>
    <property type="match status" value="1"/>
</dbReference>
<dbReference type="NCBIfam" id="NF008398">
    <property type="entry name" value="PRK11197.1"/>
    <property type="match status" value="1"/>
</dbReference>
<dbReference type="PANTHER" id="PTHR10578:SF85">
    <property type="entry name" value="L-LACTATE DEHYDROGENASE"/>
    <property type="match status" value="1"/>
</dbReference>
<dbReference type="PANTHER" id="PTHR10578">
    <property type="entry name" value="S -2-HYDROXY-ACID OXIDASE-RELATED"/>
    <property type="match status" value="1"/>
</dbReference>
<dbReference type="Pfam" id="PF01070">
    <property type="entry name" value="FMN_dh"/>
    <property type="match status" value="1"/>
</dbReference>
<dbReference type="PIRSF" id="PIRSF000138">
    <property type="entry name" value="Al-hdrx_acd_dh"/>
    <property type="match status" value="1"/>
</dbReference>
<dbReference type="SUPFAM" id="SSF51395">
    <property type="entry name" value="FMN-linked oxidoreductases"/>
    <property type="match status" value="1"/>
</dbReference>
<dbReference type="PROSITE" id="PS00557">
    <property type="entry name" value="FMN_HYDROXY_ACID_DH_1"/>
    <property type="match status" value="1"/>
</dbReference>
<dbReference type="PROSITE" id="PS51349">
    <property type="entry name" value="FMN_HYDROXY_ACID_DH_2"/>
    <property type="match status" value="1"/>
</dbReference>
<gene>
    <name evidence="1" type="primary">lldD</name>
    <name type="ordered locus">SPAB_04590</name>
</gene>
<name>LLDD_SALPB</name>
<reference key="1">
    <citation type="submission" date="2007-11" db="EMBL/GenBank/DDBJ databases">
        <authorList>
            <consortium name="The Salmonella enterica serovar Paratyphi B Genome Sequencing Project"/>
            <person name="McClelland M."/>
            <person name="Sanderson E.K."/>
            <person name="Porwollik S."/>
            <person name="Spieth J."/>
            <person name="Clifton W.S."/>
            <person name="Fulton R."/>
            <person name="Cordes M."/>
            <person name="Wollam A."/>
            <person name="Shah N."/>
            <person name="Pepin K."/>
            <person name="Bhonagiri V."/>
            <person name="Nash W."/>
            <person name="Johnson M."/>
            <person name="Thiruvilangam P."/>
            <person name="Wilson R."/>
        </authorList>
    </citation>
    <scope>NUCLEOTIDE SEQUENCE [LARGE SCALE GENOMIC DNA]</scope>
    <source>
        <strain>ATCC BAA-1250 / SPB7</strain>
    </source>
</reference>
<comment type="function">
    <text evidence="1">Catalyzes the conversion of L-lactate to pyruvate. Is coupled to the respiratory chain.</text>
</comment>
<comment type="catalytic activity">
    <reaction evidence="1">
        <text>(S)-lactate + A = pyruvate + AH2</text>
        <dbReference type="Rhea" id="RHEA:45816"/>
        <dbReference type="ChEBI" id="CHEBI:13193"/>
        <dbReference type="ChEBI" id="CHEBI:15361"/>
        <dbReference type="ChEBI" id="CHEBI:16651"/>
        <dbReference type="ChEBI" id="CHEBI:17499"/>
    </reaction>
</comment>
<comment type="cofactor">
    <cofactor evidence="1">
        <name>FMN</name>
        <dbReference type="ChEBI" id="CHEBI:58210"/>
    </cofactor>
</comment>
<comment type="subcellular location">
    <subcellularLocation>
        <location evidence="1">Cell inner membrane</location>
        <topology evidence="1">Peripheral membrane protein</topology>
    </subcellularLocation>
</comment>
<comment type="similarity">
    <text evidence="1">Belongs to the FMN-dependent alpha-hydroxy acid dehydrogenase family.</text>
</comment>
<accession>A9MVJ5</accession>
<protein>
    <recommendedName>
        <fullName evidence="1">L-lactate dehydrogenase</fullName>
        <ecNumber evidence="1">1.1.-.-</ecNumber>
    </recommendedName>
</protein>